<accession>Q94EC4</accession>
<proteinExistence type="evidence at transcript level"/>
<sequence length="513" mass="55782">MAGGAMTDTDGAHKNYPGKMTIFVFLACLVASSGGLIFGYDIGISGGVTSMDSFLIKFFPSVYAKEKEMVETNQYCKFDSELLTLFTSSLYLAALIASLFASVITRKFGRRITMLGGGVIFLVGAILNGAAADVAMLIIGRILLGIGVGFSNQAVPLYLSEMAPARMRGMLNISFQLMITVGILAANLINYFTDKIAGGWGWRVSLGLAAVPAVIMAGGSLFLPDTPNSLLSRGKENEARAMLRRIRGTDDVGPEYDDLVAASEASKAIENPWRTLLERRYRPQLVMSVLIPTLQQLTGINVVMFYAPVLFKTIGFGGTASLMSAVITGLVNMFATFVSIATVDRLGRRKLLLQGGVQMIFAQFILGTLIAVKFGTAGVANISRGYAIVVVLCICVFVSAFAWSWGPLGWLVPSEIFPLEIRSAAQSVVVVFNMAFTFIIAQIFLMMLCHLKFGLFYFFGAMELIMTGFVFFFLPETKGIPIEEMDRIWGKHWYWRRFVGAGAGGKVEITSTV</sequence>
<name>MST8_ORYSJ</name>
<reference key="1">
    <citation type="submission" date="2004-11" db="EMBL/GenBank/DDBJ databases">
        <title>Monosaccharide transporter gene expression in rice anthers.</title>
        <authorList>
            <person name="Oliver S.N."/>
            <person name="Dennis E.S."/>
            <person name="Dolferus R."/>
        </authorList>
    </citation>
    <scope>NUCLEOTIDE SEQUENCE [MRNA]</scope>
</reference>
<reference key="2">
    <citation type="journal article" date="2002" name="Nature">
        <title>The genome sequence and structure of rice chromosome 1.</title>
        <authorList>
            <person name="Sasaki T."/>
            <person name="Matsumoto T."/>
            <person name="Yamamoto K."/>
            <person name="Sakata K."/>
            <person name="Baba T."/>
            <person name="Katayose Y."/>
            <person name="Wu J."/>
            <person name="Niimura Y."/>
            <person name="Cheng Z."/>
            <person name="Nagamura Y."/>
            <person name="Antonio B.A."/>
            <person name="Kanamori H."/>
            <person name="Hosokawa S."/>
            <person name="Masukawa M."/>
            <person name="Arikawa K."/>
            <person name="Chiden Y."/>
            <person name="Hayashi M."/>
            <person name="Okamoto M."/>
            <person name="Ando T."/>
            <person name="Aoki H."/>
            <person name="Arita K."/>
            <person name="Hamada M."/>
            <person name="Harada C."/>
            <person name="Hijishita S."/>
            <person name="Honda M."/>
            <person name="Ichikawa Y."/>
            <person name="Idonuma A."/>
            <person name="Iijima M."/>
            <person name="Ikeda M."/>
            <person name="Ikeno M."/>
            <person name="Ito S."/>
            <person name="Ito T."/>
            <person name="Ito Y."/>
            <person name="Ito Y."/>
            <person name="Iwabuchi A."/>
            <person name="Kamiya K."/>
            <person name="Karasawa W."/>
            <person name="Katagiri S."/>
            <person name="Kikuta A."/>
            <person name="Kobayashi N."/>
            <person name="Kono I."/>
            <person name="Machita K."/>
            <person name="Maehara T."/>
            <person name="Mizuno H."/>
            <person name="Mizubayashi T."/>
            <person name="Mukai Y."/>
            <person name="Nagasaki H."/>
            <person name="Nakashima M."/>
            <person name="Nakama Y."/>
            <person name="Nakamichi Y."/>
            <person name="Nakamura M."/>
            <person name="Namiki N."/>
            <person name="Negishi M."/>
            <person name="Ohta I."/>
            <person name="Ono N."/>
            <person name="Saji S."/>
            <person name="Sakai K."/>
            <person name="Shibata M."/>
            <person name="Shimokawa T."/>
            <person name="Shomura A."/>
            <person name="Song J."/>
            <person name="Takazaki Y."/>
            <person name="Terasawa K."/>
            <person name="Tsuji K."/>
            <person name="Waki K."/>
            <person name="Yamagata H."/>
            <person name="Yamane H."/>
            <person name="Yoshiki S."/>
            <person name="Yoshihara R."/>
            <person name="Yukawa K."/>
            <person name="Zhong H."/>
            <person name="Iwama H."/>
            <person name="Endo T."/>
            <person name="Ito H."/>
            <person name="Hahn J.H."/>
            <person name="Kim H.-I."/>
            <person name="Eun M.-Y."/>
            <person name="Yano M."/>
            <person name="Jiang J."/>
            <person name="Gojobori T."/>
        </authorList>
    </citation>
    <scope>NUCLEOTIDE SEQUENCE [LARGE SCALE GENOMIC DNA]</scope>
    <source>
        <strain>cv. Nipponbare</strain>
    </source>
</reference>
<reference key="3">
    <citation type="journal article" date="2005" name="Nature">
        <title>The map-based sequence of the rice genome.</title>
        <authorList>
            <consortium name="International rice genome sequencing project (IRGSP)"/>
        </authorList>
    </citation>
    <scope>NUCLEOTIDE SEQUENCE [LARGE SCALE GENOMIC DNA]</scope>
    <source>
        <strain>cv. Nipponbare</strain>
    </source>
</reference>
<reference key="4">
    <citation type="journal article" date="2008" name="Nucleic Acids Res.">
        <title>The rice annotation project database (RAP-DB): 2008 update.</title>
        <authorList>
            <consortium name="The rice annotation project (RAP)"/>
        </authorList>
    </citation>
    <scope>GENOME REANNOTATION</scope>
    <source>
        <strain>cv. Nipponbare</strain>
    </source>
</reference>
<reference key="5">
    <citation type="journal article" date="2013" name="Rice">
        <title>Improvement of the Oryza sativa Nipponbare reference genome using next generation sequence and optical map data.</title>
        <authorList>
            <person name="Kawahara Y."/>
            <person name="de la Bastide M."/>
            <person name="Hamilton J.P."/>
            <person name="Kanamori H."/>
            <person name="McCombie W.R."/>
            <person name="Ouyang S."/>
            <person name="Schwartz D.C."/>
            <person name="Tanaka T."/>
            <person name="Wu J."/>
            <person name="Zhou S."/>
            <person name="Childs K.L."/>
            <person name="Davidson R.M."/>
            <person name="Lin H."/>
            <person name="Quesada-Ocampo L."/>
            <person name="Vaillancourt B."/>
            <person name="Sakai H."/>
            <person name="Lee S.S."/>
            <person name="Kim J."/>
            <person name="Numa H."/>
            <person name="Itoh T."/>
            <person name="Buell C.R."/>
            <person name="Matsumoto T."/>
        </authorList>
    </citation>
    <scope>GENOME REANNOTATION</scope>
    <source>
        <strain>cv. Nipponbare</strain>
    </source>
</reference>
<reference key="6">
    <citation type="journal article" date="2003" name="Science">
        <title>Collection, mapping, and annotation of over 28,000 cDNA clones from japonica rice.</title>
        <authorList>
            <consortium name="The rice full-length cDNA consortium"/>
        </authorList>
    </citation>
    <scope>NUCLEOTIDE SEQUENCE [LARGE SCALE MRNA]</scope>
    <source>
        <strain>cv. Nipponbare</strain>
    </source>
</reference>
<reference key="7">
    <citation type="journal article" date="2006" name="Cell Biol. Int.">
        <title>Effects of chilling on male gametophyte development in rice.</title>
        <authorList>
            <person name="Mamun E.A."/>
            <person name="Alfred S."/>
            <person name="Cantrill L.C."/>
            <person name="Overall R.L."/>
            <person name="Sutton B.G."/>
        </authorList>
    </citation>
    <scope>FUNCTION</scope>
    <scope>TISSUE SPECIFICITY</scope>
    <scope>INDUCTION</scope>
</reference>
<reference key="8">
    <citation type="journal article" date="2007" name="Plant Cell Physiol.">
        <title>ABA regulates apoplastic sugar transport and is a potential signal for cold-induced pollen sterility in rice.</title>
        <authorList>
            <person name="Oliver S.N."/>
            <person name="Dennis E.S."/>
            <person name="Dolferus R."/>
        </authorList>
    </citation>
    <scope>INDUCTION</scope>
</reference>
<evidence type="ECO:0000250" key="1">
    <source>
        <dbReference type="UniProtKB" id="Q6Z401"/>
    </source>
</evidence>
<evidence type="ECO:0000255" key="2"/>
<evidence type="ECO:0000269" key="3">
    <source>
    </source>
</evidence>
<evidence type="ECO:0000269" key="4">
    <source>
    </source>
</evidence>
<evidence type="ECO:0000303" key="5">
    <source>
    </source>
</evidence>
<evidence type="ECO:0000305" key="6"/>
<evidence type="ECO:0000305" key="7">
    <source>
    </source>
</evidence>
<evidence type="ECO:0000312" key="8">
    <source>
        <dbReference type="EMBL" id="BAB63495.2"/>
    </source>
</evidence>
<evidence type="ECO:0000312" key="9">
    <source>
        <dbReference type="EMBL" id="BAF05283.1"/>
    </source>
</evidence>
<protein>
    <recommendedName>
        <fullName evidence="6">Sugar transport protein MST8</fullName>
    </recommendedName>
    <alternativeName>
        <fullName evidence="5">Monosaccharide transporter 8</fullName>
        <shortName evidence="5">OsMST8</shortName>
    </alternativeName>
    <alternativeName>
        <fullName evidence="6">Sugar:proton symporter MST8</fullName>
    </alternativeName>
</protein>
<organism>
    <name type="scientific">Oryza sativa subsp. japonica</name>
    <name type="common">Rice</name>
    <dbReference type="NCBI Taxonomy" id="39947"/>
    <lineage>
        <taxon>Eukaryota</taxon>
        <taxon>Viridiplantae</taxon>
        <taxon>Streptophyta</taxon>
        <taxon>Embryophyta</taxon>
        <taxon>Tracheophyta</taxon>
        <taxon>Spermatophyta</taxon>
        <taxon>Magnoliopsida</taxon>
        <taxon>Liliopsida</taxon>
        <taxon>Poales</taxon>
        <taxon>Poaceae</taxon>
        <taxon>BOP clade</taxon>
        <taxon>Oryzoideae</taxon>
        <taxon>Oryzeae</taxon>
        <taxon>Oryzinae</taxon>
        <taxon>Oryza</taxon>
        <taxon>Oryza sativa</taxon>
    </lineage>
</organism>
<feature type="chain" id="PRO_0000441042" description="Sugar transport protein MST8">
    <location>
        <begin position="1"/>
        <end position="513"/>
    </location>
</feature>
<feature type="topological domain" description="Cytoplasmic" evidence="6">
    <location>
        <begin position="1"/>
        <end position="17"/>
    </location>
</feature>
<feature type="transmembrane region" description="Helical" evidence="2">
    <location>
        <begin position="18"/>
        <end position="38"/>
    </location>
</feature>
<feature type="topological domain" description="Extracellular" evidence="6">
    <location>
        <begin position="39"/>
        <end position="81"/>
    </location>
</feature>
<feature type="transmembrane region" description="Helical" evidence="2">
    <location>
        <begin position="82"/>
        <end position="102"/>
    </location>
</feature>
<feature type="topological domain" description="Cytoplasmic" evidence="6">
    <location>
        <begin position="103"/>
        <end position="116"/>
    </location>
</feature>
<feature type="transmembrane region" description="Helical" evidence="2">
    <location>
        <begin position="117"/>
        <end position="137"/>
    </location>
</feature>
<feature type="topological domain" description="Extracellular" evidence="6">
    <location>
        <begin position="138"/>
        <end position="139"/>
    </location>
</feature>
<feature type="transmembrane region" description="Helical" evidence="2">
    <location>
        <begin position="140"/>
        <end position="160"/>
    </location>
</feature>
<feature type="topological domain" description="Cytoplasmic" evidence="6">
    <location>
        <begin position="161"/>
        <end position="166"/>
    </location>
</feature>
<feature type="transmembrane region" description="Helical" evidence="2">
    <location>
        <begin position="167"/>
        <end position="187"/>
    </location>
</feature>
<feature type="topological domain" description="Extracellular" evidence="6">
    <location>
        <begin position="188"/>
        <end position="201"/>
    </location>
</feature>
<feature type="transmembrane region" description="Helical" evidence="2">
    <location>
        <begin position="202"/>
        <end position="222"/>
    </location>
</feature>
<feature type="topological domain" description="Cytoplasmic" evidence="6">
    <location>
        <begin position="223"/>
        <end position="294"/>
    </location>
</feature>
<feature type="transmembrane region" description="Helical" evidence="2">
    <location>
        <begin position="295"/>
        <end position="315"/>
    </location>
</feature>
<feature type="topological domain" description="Extracellular" evidence="6">
    <location>
        <begin position="316"/>
        <end position="320"/>
    </location>
</feature>
<feature type="transmembrane region" description="Helical" evidence="2">
    <location>
        <begin position="321"/>
        <end position="341"/>
    </location>
</feature>
<feature type="topological domain" description="Cytoplasmic" evidence="6">
    <location>
        <begin position="342"/>
        <end position="347"/>
    </location>
</feature>
<feature type="transmembrane region" description="Helical" evidence="2">
    <location>
        <begin position="348"/>
        <end position="368"/>
    </location>
</feature>
<feature type="topological domain" description="Extracellular" evidence="6">
    <location>
        <begin position="369"/>
        <end position="385"/>
    </location>
</feature>
<feature type="transmembrane region" description="Helical" evidence="2">
    <location>
        <begin position="386"/>
        <end position="406"/>
    </location>
</feature>
<feature type="topological domain" description="Cytoplasmic" evidence="6">
    <location>
        <begin position="407"/>
        <end position="425"/>
    </location>
</feature>
<feature type="transmembrane region" description="Helical" evidence="2">
    <location>
        <begin position="426"/>
        <end position="446"/>
    </location>
</feature>
<feature type="topological domain" description="Extracellular" evidence="6">
    <location>
        <begin position="447"/>
        <end position="450"/>
    </location>
</feature>
<feature type="transmembrane region" description="Helical" evidence="2">
    <location>
        <begin position="451"/>
        <end position="471"/>
    </location>
</feature>
<feature type="topological domain" description="Cytoplasmic" evidence="6">
    <location>
        <begin position="472"/>
        <end position="512"/>
    </location>
</feature>
<comment type="function">
    <text evidence="1 7">Mediates active uptake of hexoses by sugar:proton symport (By similarity). May play an important role in transporting monosaccharides during anther development (Probable).</text>
</comment>
<comment type="subcellular location">
    <subcellularLocation>
        <location evidence="2">Membrane</location>
        <topology evidence="2">Multi-pass membrane protein</topology>
    </subcellularLocation>
</comment>
<comment type="tissue specificity">
    <text evidence="3">Expressed specifically in anthers.</text>
</comment>
<comment type="induction">
    <text evidence="3 4">Repressed by cold (PubMed:16730464, PubMed:17693452). Repressed by abscisic acid (ABA) (PubMed:17693452).</text>
</comment>
<comment type="similarity">
    <text evidence="6">Belongs to the major facilitator superfamily. Sugar transporter (TC 2.A.1.1) family.</text>
</comment>
<gene>
    <name evidence="5" type="primary">MST8</name>
    <name evidence="9" type="ordered locus">Os01g0567500</name>
    <name evidence="6" type="ordered locus">LOC_Os01g38670</name>
    <name evidence="8" type="ORF">P0002B05.20</name>
</gene>
<keyword id="KW-0472">Membrane</keyword>
<keyword id="KW-1185">Reference proteome</keyword>
<keyword id="KW-0762">Sugar transport</keyword>
<keyword id="KW-0769">Symport</keyword>
<keyword id="KW-0812">Transmembrane</keyword>
<keyword id="KW-1133">Transmembrane helix</keyword>
<keyword id="KW-0813">Transport</keyword>
<dbReference type="EMBL" id="AY822464">
    <property type="protein sequence ID" value="AAV71143.1"/>
    <property type="molecule type" value="mRNA"/>
</dbReference>
<dbReference type="EMBL" id="AP003141">
    <property type="protein sequence ID" value="BAB63495.2"/>
    <property type="molecule type" value="Genomic_DNA"/>
</dbReference>
<dbReference type="EMBL" id="AP008207">
    <property type="protein sequence ID" value="BAF05283.1"/>
    <property type="molecule type" value="Genomic_DNA"/>
</dbReference>
<dbReference type="EMBL" id="AP014957">
    <property type="protein sequence ID" value="BAS72763.1"/>
    <property type="molecule type" value="Genomic_DNA"/>
</dbReference>
<dbReference type="EMBL" id="AK069327">
    <property type="protein sequence ID" value="BAG91380.1"/>
    <property type="molecule type" value="mRNA"/>
</dbReference>
<dbReference type="SMR" id="Q94EC4"/>
<dbReference type="FunCoup" id="Q94EC4">
    <property type="interactions" value="110"/>
</dbReference>
<dbReference type="STRING" id="39947.Q94EC4"/>
<dbReference type="PaxDb" id="39947-Q94EC4"/>
<dbReference type="EnsemblPlants" id="Os01t0567500-01">
    <property type="protein sequence ID" value="Os01t0567500-01"/>
    <property type="gene ID" value="Os01g0567500"/>
</dbReference>
<dbReference type="GeneID" id="4326342"/>
<dbReference type="Gramene" id="Os01t0567500-01">
    <property type="protein sequence ID" value="Os01t0567500-01"/>
    <property type="gene ID" value="Os01g0567500"/>
</dbReference>
<dbReference type="KEGG" id="dosa:Os01g0567500"/>
<dbReference type="KEGG" id="osa:4326342"/>
<dbReference type="eggNOG" id="KOG0254">
    <property type="taxonomic scope" value="Eukaryota"/>
</dbReference>
<dbReference type="HOGENOM" id="CLU_001265_30_5_1"/>
<dbReference type="InParanoid" id="Q94EC4"/>
<dbReference type="OMA" id="CWIRQLE"/>
<dbReference type="OrthoDB" id="5296287at2759"/>
<dbReference type="Proteomes" id="UP000000763">
    <property type="component" value="Chromosome 1"/>
</dbReference>
<dbReference type="Proteomes" id="UP000059680">
    <property type="component" value="Chromosome 1"/>
</dbReference>
<dbReference type="GO" id="GO:0016020">
    <property type="term" value="C:membrane"/>
    <property type="evidence" value="ECO:0007669"/>
    <property type="project" value="UniProtKB-SubCell"/>
</dbReference>
<dbReference type="GO" id="GO:0015145">
    <property type="term" value="F:monosaccharide transmembrane transporter activity"/>
    <property type="evidence" value="ECO:0007669"/>
    <property type="project" value="InterPro"/>
</dbReference>
<dbReference type="GO" id="GO:0015293">
    <property type="term" value="F:symporter activity"/>
    <property type="evidence" value="ECO:0007669"/>
    <property type="project" value="UniProtKB-KW"/>
</dbReference>
<dbReference type="CDD" id="cd17361">
    <property type="entry name" value="MFS_STP"/>
    <property type="match status" value="1"/>
</dbReference>
<dbReference type="FunFam" id="1.20.1250.20:FF:000002">
    <property type="entry name" value="Sugar transport protein 13"/>
    <property type="match status" value="1"/>
</dbReference>
<dbReference type="Gene3D" id="1.20.1250.20">
    <property type="entry name" value="MFS general substrate transporter like domains"/>
    <property type="match status" value="1"/>
</dbReference>
<dbReference type="InterPro" id="IPR020846">
    <property type="entry name" value="MFS_dom"/>
</dbReference>
<dbReference type="InterPro" id="IPR044778">
    <property type="entry name" value="MFS_STP/MST-like_plant"/>
</dbReference>
<dbReference type="InterPro" id="IPR005828">
    <property type="entry name" value="MFS_sugar_transport-like"/>
</dbReference>
<dbReference type="InterPro" id="IPR036259">
    <property type="entry name" value="MFS_trans_sf"/>
</dbReference>
<dbReference type="InterPro" id="IPR045262">
    <property type="entry name" value="STP/PLT_plant"/>
</dbReference>
<dbReference type="InterPro" id="IPR003663">
    <property type="entry name" value="Sugar/inositol_transpt"/>
</dbReference>
<dbReference type="InterPro" id="IPR005829">
    <property type="entry name" value="Sugar_transporter_CS"/>
</dbReference>
<dbReference type="NCBIfam" id="TIGR00879">
    <property type="entry name" value="SP"/>
    <property type="match status" value="1"/>
</dbReference>
<dbReference type="PANTHER" id="PTHR23500">
    <property type="entry name" value="SOLUTE CARRIER FAMILY 2, FACILITATED GLUCOSE TRANSPORTER"/>
    <property type="match status" value="1"/>
</dbReference>
<dbReference type="PANTHER" id="PTHR23500:SF10">
    <property type="entry name" value="SUGAR TRANSPORT PROTEIN MST8"/>
    <property type="match status" value="1"/>
</dbReference>
<dbReference type="Pfam" id="PF00083">
    <property type="entry name" value="Sugar_tr"/>
    <property type="match status" value="1"/>
</dbReference>
<dbReference type="PRINTS" id="PR00171">
    <property type="entry name" value="SUGRTRNSPORT"/>
</dbReference>
<dbReference type="SUPFAM" id="SSF103473">
    <property type="entry name" value="MFS general substrate transporter"/>
    <property type="match status" value="1"/>
</dbReference>
<dbReference type="PROSITE" id="PS50850">
    <property type="entry name" value="MFS"/>
    <property type="match status" value="1"/>
</dbReference>
<dbReference type="PROSITE" id="PS00216">
    <property type="entry name" value="SUGAR_TRANSPORT_1"/>
    <property type="match status" value="1"/>
</dbReference>
<dbReference type="PROSITE" id="PS00217">
    <property type="entry name" value="SUGAR_TRANSPORT_2"/>
    <property type="match status" value="1"/>
</dbReference>